<dbReference type="EMBL" id="AM039952">
    <property type="protein sequence ID" value="CAJ22150.1"/>
    <property type="molecule type" value="Genomic_DNA"/>
</dbReference>
<dbReference type="SMR" id="Q3BYB3"/>
<dbReference type="STRING" id="456327.BJD11_20280"/>
<dbReference type="KEGG" id="xcv:XCV0519"/>
<dbReference type="eggNOG" id="COG0664">
    <property type="taxonomic scope" value="Bacteria"/>
</dbReference>
<dbReference type="HOGENOM" id="CLU_075053_3_5_6"/>
<dbReference type="Proteomes" id="UP000007069">
    <property type="component" value="Chromosome"/>
</dbReference>
<dbReference type="GO" id="GO:0005829">
    <property type="term" value="C:cytosol"/>
    <property type="evidence" value="ECO:0007669"/>
    <property type="project" value="TreeGrafter"/>
</dbReference>
<dbReference type="GO" id="GO:0003824">
    <property type="term" value="F:catalytic activity"/>
    <property type="evidence" value="ECO:0007669"/>
    <property type="project" value="UniProtKB-KW"/>
</dbReference>
<dbReference type="GO" id="GO:0035438">
    <property type="term" value="F:cyclic-di-GMP binding"/>
    <property type="evidence" value="ECO:0000250"/>
    <property type="project" value="UniProtKB"/>
</dbReference>
<dbReference type="GO" id="GO:0003677">
    <property type="term" value="F:DNA binding"/>
    <property type="evidence" value="ECO:0000250"/>
    <property type="project" value="UniProtKB"/>
</dbReference>
<dbReference type="GO" id="GO:0003700">
    <property type="term" value="F:DNA-binding transcription factor activity"/>
    <property type="evidence" value="ECO:0000250"/>
    <property type="project" value="UniProtKB"/>
</dbReference>
<dbReference type="GO" id="GO:0046983">
    <property type="term" value="F:protein dimerization activity"/>
    <property type="evidence" value="ECO:0000250"/>
    <property type="project" value="UniProtKB"/>
</dbReference>
<dbReference type="GO" id="GO:0006355">
    <property type="term" value="P:regulation of DNA-templated transcription"/>
    <property type="evidence" value="ECO:0000250"/>
    <property type="project" value="UniProtKB"/>
</dbReference>
<dbReference type="CDD" id="cd00038">
    <property type="entry name" value="CAP_ED"/>
    <property type="match status" value="1"/>
</dbReference>
<dbReference type="FunFam" id="1.10.10.10:FF:000006">
    <property type="entry name" value="cAMP-activated global transcriptional regulator CRP"/>
    <property type="match status" value="1"/>
</dbReference>
<dbReference type="FunFam" id="2.60.120.10:FF:000100">
    <property type="entry name" value="CRP-like protein Clp"/>
    <property type="match status" value="1"/>
</dbReference>
<dbReference type="Gene3D" id="2.60.120.10">
    <property type="entry name" value="Jelly Rolls"/>
    <property type="match status" value="1"/>
</dbReference>
<dbReference type="Gene3D" id="1.10.10.10">
    <property type="entry name" value="Winged helix-like DNA-binding domain superfamily/Winged helix DNA-binding domain"/>
    <property type="match status" value="1"/>
</dbReference>
<dbReference type="InterPro" id="IPR000595">
    <property type="entry name" value="cNMP-bd_dom"/>
</dbReference>
<dbReference type="InterPro" id="IPR018490">
    <property type="entry name" value="cNMP-bd_dom_sf"/>
</dbReference>
<dbReference type="InterPro" id="IPR050397">
    <property type="entry name" value="Env_Response_Regulators"/>
</dbReference>
<dbReference type="InterPro" id="IPR012318">
    <property type="entry name" value="HTH_CRP"/>
</dbReference>
<dbReference type="InterPro" id="IPR014710">
    <property type="entry name" value="RmlC-like_jellyroll"/>
</dbReference>
<dbReference type="InterPro" id="IPR018335">
    <property type="entry name" value="Tscrpt_reg_HTH_Crp-type_CS"/>
</dbReference>
<dbReference type="InterPro" id="IPR036388">
    <property type="entry name" value="WH-like_DNA-bd_sf"/>
</dbReference>
<dbReference type="InterPro" id="IPR036390">
    <property type="entry name" value="WH_DNA-bd_sf"/>
</dbReference>
<dbReference type="NCBIfam" id="NF008732">
    <property type="entry name" value="PRK11753.1"/>
    <property type="match status" value="1"/>
</dbReference>
<dbReference type="PANTHER" id="PTHR24567">
    <property type="entry name" value="CRP FAMILY TRANSCRIPTIONAL REGULATORY PROTEIN"/>
    <property type="match status" value="1"/>
</dbReference>
<dbReference type="PANTHER" id="PTHR24567:SF68">
    <property type="entry name" value="DNA-BINDING TRANSCRIPTIONAL DUAL REGULATOR CRP"/>
    <property type="match status" value="1"/>
</dbReference>
<dbReference type="Pfam" id="PF00027">
    <property type="entry name" value="cNMP_binding"/>
    <property type="match status" value="1"/>
</dbReference>
<dbReference type="Pfam" id="PF00325">
    <property type="entry name" value="Crp"/>
    <property type="match status" value="1"/>
</dbReference>
<dbReference type="PRINTS" id="PR00034">
    <property type="entry name" value="HTHCRP"/>
</dbReference>
<dbReference type="SMART" id="SM00100">
    <property type="entry name" value="cNMP"/>
    <property type="match status" value="1"/>
</dbReference>
<dbReference type="SMART" id="SM00419">
    <property type="entry name" value="HTH_CRP"/>
    <property type="match status" value="1"/>
</dbReference>
<dbReference type="SUPFAM" id="SSF51206">
    <property type="entry name" value="cAMP-binding domain-like"/>
    <property type="match status" value="1"/>
</dbReference>
<dbReference type="SUPFAM" id="SSF46785">
    <property type="entry name" value="Winged helix' DNA-binding domain"/>
    <property type="match status" value="1"/>
</dbReference>
<dbReference type="PROSITE" id="PS50042">
    <property type="entry name" value="CNMP_BINDING_3"/>
    <property type="match status" value="1"/>
</dbReference>
<dbReference type="PROSITE" id="PS00042">
    <property type="entry name" value="HTH_CRP_1"/>
    <property type="match status" value="1"/>
</dbReference>
<dbReference type="PROSITE" id="PS51063">
    <property type="entry name" value="HTH_CRP_2"/>
    <property type="match status" value="1"/>
</dbReference>
<reference key="1">
    <citation type="journal article" date="2005" name="J. Bacteriol.">
        <title>Insights into genome plasticity and pathogenicity of the plant pathogenic Bacterium Xanthomonas campestris pv. vesicatoria revealed by the complete genome sequence.</title>
        <authorList>
            <person name="Thieme F."/>
            <person name="Koebnik R."/>
            <person name="Bekel T."/>
            <person name="Berger C."/>
            <person name="Boch J."/>
            <person name="Buettner D."/>
            <person name="Caldana C."/>
            <person name="Gaigalat L."/>
            <person name="Goesmann A."/>
            <person name="Kay S."/>
            <person name="Kirchner O."/>
            <person name="Lanz C."/>
            <person name="Linke B."/>
            <person name="McHardy A.C."/>
            <person name="Meyer F."/>
            <person name="Mittenhuber G."/>
            <person name="Nies D.H."/>
            <person name="Niesbach-Kloesgen U."/>
            <person name="Patschkowski T."/>
            <person name="Rueckert C."/>
            <person name="Rupp O."/>
            <person name="Schneiker S."/>
            <person name="Schuster S.C."/>
            <person name="Vorhoelter F.J."/>
            <person name="Weber E."/>
            <person name="Puehler A."/>
            <person name="Bonas U."/>
            <person name="Bartels D."/>
            <person name="Kaiser O."/>
        </authorList>
    </citation>
    <scope>NUCLEOTIDE SEQUENCE [LARGE SCALE GENOMIC DNA]</scope>
    <source>
        <strain>85-10</strain>
    </source>
</reference>
<evidence type="ECO:0000250" key="1"/>
<evidence type="ECO:0000255" key="2">
    <source>
        <dbReference type="PROSITE-ProRule" id="PRU00387"/>
    </source>
</evidence>
<evidence type="ECO:0000305" key="3"/>
<accession>Q3BYB3</accession>
<name>CLP_XANE5</name>
<comment type="function">
    <text evidence="1">Global transcriptional regulator that regulates virulence factors production by activating or repressing the expression of a large set of genes in diffusible signal factor (DSF) pathway.</text>
</comment>
<comment type="activity regulation">
    <text evidence="1">Allosterically inhibited by cyclic di-GMP (c-di-GMP), which binds to Clp and abolishes its ability to bind its target gene promoter.</text>
</comment>
<comment type="subunit">
    <text evidence="1">Homodimer.</text>
</comment>
<comment type="subcellular location">
    <subcellularLocation>
        <location evidence="3">Cytoplasm</location>
    </subcellularLocation>
</comment>
<comment type="domain">
    <text evidence="1">Binding of c-di-GMP appears to trigger the active Clp conformation into an open form or inactive state, hence abolishing its DNA-binding ability.</text>
</comment>
<protein>
    <recommendedName>
        <fullName>CRP-like protein Clp</fullName>
    </recommendedName>
    <alternativeName>
        <fullName>Catabolite activation-like protein</fullName>
        <shortName>CAP-like</shortName>
    </alternativeName>
</protein>
<feature type="chain" id="PRO_0000405704" description="CRP-like protein Clp">
    <location>
        <begin position="1"/>
        <end position="230"/>
    </location>
</feature>
<feature type="domain" description="HTH crp-type" evidence="2">
    <location>
        <begin position="158"/>
        <end position="230"/>
    </location>
</feature>
<feature type="DNA-binding region" description="H-T-H motif" evidence="2">
    <location>
        <begin position="190"/>
        <end position="209"/>
    </location>
</feature>
<feature type="binding site">
    <location>
        <begin position="18"/>
        <end position="139"/>
    </location>
    <ligand>
        <name>a nucleoside 3',5'-cyclic phosphate</name>
        <dbReference type="ChEBI" id="CHEBI:58464"/>
    </ligand>
</feature>
<keyword id="KW-0010">Activator</keyword>
<keyword id="KW-0021">Allosteric enzyme</keyword>
<keyword id="KW-0973">c-di-GMP</keyword>
<keyword id="KW-0963">Cytoplasm</keyword>
<keyword id="KW-0238">DNA-binding</keyword>
<keyword id="KW-0678">Repressor</keyword>
<keyword id="KW-0804">Transcription</keyword>
<keyword id="KW-0805">Transcription regulation</keyword>
<keyword id="KW-0843">Virulence</keyword>
<sequence>MSPGNTTVVTTTVRNATPSLALDAGTIERFLAHSHRRRYPTRTDVFRPGDPAGTLYYVISGSVSIIAEEDDDRELVLGYFGSGEFVGEMGLFIESDTREVILRTRTQCELAEISYERLQQLFQTSLSPDAPKILYAIGVQLSKRLLDTTRKASRLAFLDVTDRIVRTLHDLAKEPEAMSHPQGTQLRVSRQELARLVGCSREMAGRVLKKLQADGLLHARGKTVVLYGTR</sequence>
<gene>
    <name type="primary">clp</name>
    <name type="ordered locus">XCV0519</name>
</gene>
<proteinExistence type="inferred from homology"/>
<organism>
    <name type="scientific">Xanthomonas euvesicatoria pv. vesicatoria (strain 85-10)</name>
    <name type="common">Xanthomonas campestris pv. vesicatoria</name>
    <dbReference type="NCBI Taxonomy" id="316273"/>
    <lineage>
        <taxon>Bacteria</taxon>
        <taxon>Pseudomonadati</taxon>
        <taxon>Pseudomonadota</taxon>
        <taxon>Gammaproteobacteria</taxon>
        <taxon>Lysobacterales</taxon>
        <taxon>Lysobacteraceae</taxon>
        <taxon>Xanthomonas</taxon>
    </lineage>
</organism>